<dbReference type="EMBL" id="D01016">
    <property type="protein sequence ID" value="BAA00822.1"/>
    <property type="molecule type" value="Genomic_DNA"/>
</dbReference>
<dbReference type="PIR" id="JU0384">
    <property type="entry name" value="JU0384"/>
</dbReference>
<dbReference type="SMR" id="P0A3A8"/>
<dbReference type="GO" id="GO:0008199">
    <property type="term" value="F:ferric iron binding"/>
    <property type="evidence" value="ECO:0007669"/>
    <property type="project" value="InterPro"/>
</dbReference>
<dbReference type="GO" id="GO:0016722">
    <property type="term" value="F:oxidoreductase activity, acting on metal ions"/>
    <property type="evidence" value="ECO:0007669"/>
    <property type="project" value="InterPro"/>
</dbReference>
<dbReference type="CDD" id="cd01043">
    <property type="entry name" value="DPS"/>
    <property type="match status" value="1"/>
</dbReference>
<dbReference type="Gene3D" id="1.20.1260.10">
    <property type="match status" value="1"/>
</dbReference>
<dbReference type="InterPro" id="IPR002177">
    <property type="entry name" value="DPS_DNA-bd"/>
</dbReference>
<dbReference type="InterPro" id="IPR023188">
    <property type="entry name" value="DPS_DNA-bd_CS"/>
</dbReference>
<dbReference type="InterPro" id="IPR012347">
    <property type="entry name" value="Ferritin-like"/>
</dbReference>
<dbReference type="InterPro" id="IPR009078">
    <property type="entry name" value="Ferritin-like_SF"/>
</dbReference>
<dbReference type="InterPro" id="IPR008331">
    <property type="entry name" value="Ferritin_DPS_dom"/>
</dbReference>
<dbReference type="PANTHER" id="PTHR42932:SF3">
    <property type="entry name" value="DNA PROTECTION DURING STARVATION PROTEIN"/>
    <property type="match status" value="1"/>
</dbReference>
<dbReference type="PANTHER" id="PTHR42932">
    <property type="entry name" value="GENERAL STRESS PROTEIN 20U"/>
    <property type="match status" value="1"/>
</dbReference>
<dbReference type="Pfam" id="PF00210">
    <property type="entry name" value="Ferritin"/>
    <property type="match status" value="1"/>
</dbReference>
<dbReference type="PIRSF" id="PIRSF005900">
    <property type="entry name" value="Dps"/>
    <property type="match status" value="1"/>
</dbReference>
<dbReference type="PRINTS" id="PR01346">
    <property type="entry name" value="HELNAPAPROT"/>
</dbReference>
<dbReference type="SUPFAM" id="SSF47240">
    <property type="entry name" value="Ferritin-like"/>
    <property type="match status" value="1"/>
</dbReference>
<dbReference type="PROSITE" id="PS00818">
    <property type="entry name" value="DPS_1"/>
    <property type="match status" value="1"/>
</dbReference>
<dbReference type="PROSITE" id="PS00819">
    <property type="entry name" value="DPS_2"/>
    <property type="match status" value="1"/>
</dbReference>
<protein>
    <recommendedName>
        <fullName>Uncharacterized low temperature-induced protein all0458 homolog</fullName>
    </recommendedName>
</protein>
<evidence type="ECO:0000256" key="1">
    <source>
        <dbReference type="SAM" id="MobiDB-lite"/>
    </source>
</evidence>
<evidence type="ECO:0000305" key="2"/>
<comment type="similarity">
    <text evidence="2">Belongs to the Dps family.</text>
</comment>
<feature type="chain" id="PRO_0000201667" description="Uncharacterized low temperature-induced protein all0458 homolog">
    <location>
        <begin position="1"/>
        <end position="179"/>
    </location>
</feature>
<feature type="region of interest" description="Disordered" evidence="1">
    <location>
        <begin position="160"/>
        <end position="179"/>
    </location>
</feature>
<feature type="compositionally biased region" description="Polar residues" evidence="1">
    <location>
        <begin position="165"/>
        <end position="179"/>
    </location>
</feature>
<proteinExistence type="inferred from homology"/>
<reference key="1">
    <citation type="submission" date="1991-04" db="EMBL/GenBank/DDBJ databases">
        <title>Cloning of a low temperature-induced gene lti46 in the cyanobacterium Anabaena variabilis M3.</title>
        <authorList>
            <person name="Sato N."/>
        </authorList>
    </citation>
    <scope>NUCLEOTIDE SEQUENCE [GENOMIC DNA]</scope>
    <source>
        <strain>M3</strain>
    </source>
</reference>
<sequence length="179" mass="20233">MPRINIGLTDEQRQGVINLLNQDLADSYLLLVKTKKYHWDVVGPQFRSLHQLWEEHYEKLTENIDAIAERVRTLGGYPIGSMEGFLQLATLKEHAGDVPSATGMVANLVQDHEQLIRNLRDHVDRSGDEFQDQGTADFLTGLMEEHEEIAWMLRSFIEGQPIEPNGTQPATETKTPVGV</sequence>
<accession>P0A3A8</accession>
<accession>P29712</accession>
<organism>
    <name type="scientific">Anabaena variabilis</name>
    <dbReference type="NCBI Taxonomy" id="264691"/>
    <lineage>
        <taxon>Bacteria</taxon>
        <taxon>Bacillati</taxon>
        <taxon>Cyanobacteriota</taxon>
        <taxon>Cyanophyceae</taxon>
        <taxon>Nostocales</taxon>
        <taxon>Nostocaceae</taxon>
        <taxon>Trichormus</taxon>
    </lineage>
</organism>
<name>Y458_ANAVA</name>